<organism>
    <name type="scientific">Shewanella frigidimarina (strain NCIMB 400)</name>
    <dbReference type="NCBI Taxonomy" id="318167"/>
    <lineage>
        <taxon>Bacteria</taxon>
        <taxon>Pseudomonadati</taxon>
        <taxon>Pseudomonadota</taxon>
        <taxon>Gammaproteobacteria</taxon>
        <taxon>Alteromonadales</taxon>
        <taxon>Shewanellaceae</taxon>
        <taxon>Shewanella</taxon>
    </lineage>
</organism>
<dbReference type="EC" id="2.7.7.87" evidence="1"/>
<dbReference type="EMBL" id="CP000447">
    <property type="protein sequence ID" value="ABI69892.1"/>
    <property type="molecule type" value="Genomic_DNA"/>
</dbReference>
<dbReference type="RefSeq" id="WP_011635521.1">
    <property type="nucleotide sequence ID" value="NC_008345.1"/>
</dbReference>
<dbReference type="SMR" id="Q08A23"/>
<dbReference type="STRING" id="318167.Sfri_0029"/>
<dbReference type="KEGG" id="sfr:Sfri_0029"/>
<dbReference type="eggNOG" id="COG0009">
    <property type="taxonomic scope" value="Bacteria"/>
</dbReference>
<dbReference type="HOGENOM" id="CLU_031397_6_0_6"/>
<dbReference type="OrthoDB" id="9814580at2"/>
<dbReference type="Proteomes" id="UP000000684">
    <property type="component" value="Chromosome"/>
</dbReference>
<dbReference type="GO" id="GO:0005737">
    <property type="term" value="C:cytoplasm"/>
    <property type="evidence" value="ECO:0007669"/>
    <property type="project" value="UniProtKB-SubCell"/>
</dbReference>
<dbReference type="GO" id="GO:0005524">
    <property type="term" value="F:ATP binding"/>
    <property type="evidence" value="ECO:0007669"/>
    <property type="project" value="UniProtKB-UniRule"/>
</dbReference>
<dbReference type="GO" id="GO:0003725">
    <property type="term" value="F:double-stranded RNA binding"/>
    <property type="evidence" value="ECO:0007669"/>
    <property type="project" value="InterPro"/>
</dbReference>
<dbReference type="GO" id="GO:0061710">
    <property type="term" value="F:L-threonylcarbamoyladenylate synthase"/>
    <property type="evidence" value="ECO:0007669"/>
    <property type="project" value="UniProtKB-EC"/>
</dbReference>
<dbReference type="GO" id="GO:0000049">
    <property type="term" value="F:tRNA binding"/>
    <property type="evidence" value="ECO:0007669"/>
    <property type="project" value="TreeGrafter"/>
</dbReference>
<dbReference type="GO" id="GO:0006450">
    <property type="term" value="P:regulation of translational fidelity"/>
    <property type="evidence" value="ECO:0007669"/>
    <property type="project" value="TreeGrafter"/>
</dbReference>
<dbReference type="GO" id="GO:0002949">
    <property type="term" value="P:tRNA threonylcarbamoyladenosine modification"/>
    <property type="evidence" value="ECO:0007669"/>
    <property type="project" value="UniProtKB-UniRule"/>
</dbReference>
<dbReference type="FunFam" id="3.90.870.10:FF:000004">
    <property type="entry name" value="Threonylcarbamoyl-AMP synthase"/>
    <property type="match status" value="1"/>
</dbReference>
<dbReference type="Gene3D" id="3.90.870.10">
    <property type="entry name" value="DHBP synthase"/>
    <property type="match status" value="1"/>
</dbReference>
<dbReference type="HAMAP" id="MF_01852">
    <property type="entry name" value="TsaC"/>
    <property type="match status" value="1"/>
</dbReference>
<dbReference type="InterPro" id="IPR017945">
    <property type="entry name" value="DHBP_synth_RibB-like_a/b_dom"/>
</dbReference>
<dbReference type="InterPro" id="IPR006070">
    <property type="entry name" value="Sua5-like_dom"/>
</dbReference>
<dbReference type="InterPro" id="IPR023535">
    <property type="entry name" value="TC-AMP_synthase"/>
</dbReference>
<dbReference type="InterPro" id="IPR050156">
    <property type="entry name" value="TC-AMP_synthase_SUA5"/>
</dbReference>
<dbReference type="NCBIfam" id="TIGR00057">
    <property type="entry name" value="L-threonylcarbamoyladenylate synthase"/>
    <property type="match status" value="1"/>
</dbReference>
<dbReference type="PANTHER" id="PTHR17490">
    <property type="entry name" value="SUA5"/>
    <property type="match status" value="1"/>
</dbReference>
<dbReference type="PANTHER" id="PTHR17490:SF18">
    <property type="entry name" value="THREONYLCARBAMOYL-AMP SYNTHASE"/>
    <property type="match status" value="1"/>
</dbReference>
<dbReference type="Pfam" id="PF01300">
    <property type="entry name" value="Sua5_yciO_yrdC"/>
    <property type="match status" value="1"/>
</dbReference>
<dbReference type="SUPFAM" id="SSF55821">
    <property type="entry name" value="YrdC/RibB"/>
    <property type="match status" value="1"/>
</dbReference>
<dbReference type="PROSITE" id="PS51163">
    <property type="entry name" value="YRDC"/>
    <property type="match status" value="1"/>
</dbReference>
<accession>Q08A23</accession>
<protein>
    <recommendedName>
        <fullName evidence="1">Threonylcarbamoyl-AMP synthase</fullName>
        <shortName evidence="1">TC-AMP synthase</shortName>
        <ecNumber evidence="1">2.7.7.87</ecNumber>
    </recommendedName>
    <alternativeName>
        <fullName evidence="1">L-threonylcarbamoyladenylate synthase</fullName>
    </alternativeName>
    <alternativeName>
        <fullName evidence="1">t(6)A37 threonylcarbamoyladenosine biosynthesis protein TsaC</fullName>
    </alternativeName>
    <alternativeName>
        <fullName evidence="1">tRNA threonylcarbamoyladenosine biosynthesis protein TsaC</fullName>
    </alternativeName>
</protein>
<keyword id="KW-0067">ATP-binding</keyword>
<keyword id="KW-0963">Cytoplasm</keyword>
<keyword id="KW-0547">Nucleotide-binding</keyword>
<keyword id="KW-0548">Nucleotidyltransferase</keyword>
<keyword id="KW-1185">Reference proteome</keyword>
<keyword id="KW-0808">Transferase</keyword>
<keyword id="KW-0819">tRNA processing</keyword>
<comment type="function">
    <text evidence="1">Required for the formation of a threonylcarbamoyl group on adenosine at position 37 (t(6)A37) in tRNAs that read codons beginning with adenine. Catalyzes the conversion of L-threonine, HCO(3)(-)/CO(2) and ATP to give threonylcarbamoyl-AMP (TC-AMP) as the acyladenylate intermediate, with the release of diphosphate.</text>
</comment>
<comment type="catalytic activity">
    <reaction evidence="1">
        <text>L-threonine + hydrogencarbonate + ATP = L-threonylcarbamoyladenylate + diphosphate + H2O</text>
        <dbReference type="Rhea" id="RHEA:36407"/>
        <dbReference type="ChEBI" id="CHEBI:15377"/>
        <dbReference type="ChEBI" id="CHEBI:17544"/>
        <dbReference type="ChEBI" id="CHEBI:30616"/>
        <dbReference type="ChEBI" id="CHEBI:33019"/>
        <dbReference type="ChEBI" id="CHEBI:57926"/>
        <dbReference type="ChEBI" id="CHEBI:73682"/>
        <dbReference type="EC" id="2.7.7.87"/>
    </reaction>
</comment>
<comment type="subcellular location">
    <subcellularLocation>
        <location evidence="1">Cytoplasm</location>
    </subcellularLocation>
</comment>
<comment type="similarity">
    <text evidence="1">Belongs to the SUA5 family. TsaC subfamily.</text>
</comment>
<sequence length="188" mass="20478">MLQLQPSAVATTIQQGGVIAYPTEAVFGLGCDPDNDSAIEKLLVVKQRPWQKGLILVASSFEQLLPYLDITQLTEQQLQFAQSKWPGPFTFVMPIQSHVSKLLCGEFDSIAVRVSAHPVVRELCDTLNKPLVSTSANLAGEQPVVDAQHIITDFSDKIDALILGKLGEQRQPSTIIDARSGQILRNGS</sequence>
<proteinExistence type="inferred from homology"/>
<name>TSAC_SHEFN</name>
<gene>
    <name evidence="1" type="primary">tsaC</name>
    <name type="synonym">rimN</name>
    <name type="ordered locus">Sfri_0029</name>
</gene>
<evidence type="ECO:0000255" key="1">
    <source>
        <dbReference type="HAMAP-Rule" id="MF_01852"/>
    </source>
</evidence>
<feature type="chain" id="PRO_0000352979" description="Threonylcarbamoyl-AMP synthase">
    <location>
        <begin position="1"/>
        <end position="188"/>
    </location>
</feature>
<feature type="domain" description="YrdC-like" evidence="1">
    <location>
        <begin position="3"/>
        <end position="188"/>
    </location>
</feature>
<reference key="1">
    <citation type="submission" date="2006-08" db="EMBL/GenBank/DDBJ databases">
        <title>Complete sequence of Shewanella frigidimarina NCIMB 400.</title>
        <authorList>
            <consortium name="US DOE Joint Genome Institute"/>
            <person name="Copeland A."/>
            <person name="Lucas S."/>
            <person name="Lapidus A."/>
            <person name="Barry K."/>
            <person name="Detter J.C."/>
            <person name="Glavina del Rio T."/>
            <person name="Hammon N."/>
            <person name="Israni S."/>
            <person name="Dalin E."/>
            <person name="Tice H."/>
            <person name="Pitluck S."/>
            <person name="Fredrickson J.K."/>
            <person name="Kolker E."/>
            <person name="McCuel L.A."/>
            <person name="DiChristina T."/>
            <person name="Nealson K.H."/>
            <person name="Newman D."/>
            <person name="Tiedje J.M."/>
            <person name="Zhou J."/>
            <person name="Romine M.F."/>
            <person name="Culley D.E."/>
            <person name="Serres M."/>
            <person name="Chertkov O."/>
            <person name="Brettin T."/>
            <person name="Bruce D."/>
            <person name="Han C."/>
            <person name="Tapia R."/>
            <person name="Gilna P."/>
            <person name="Schmutz J."/>
            <person name="Larimer F."/>
            <person name="Land M."/>
            <person name="Hauser L."/>
            <person name="Kyrpides N."/>
            <person name="Mikhailova N."/>
            <person name="Richardson P."/>
        </authorList>
    </citation>
    <scope>NUCLEOTIDE SEQUENCE [LARGE SCALE GENOMIC DNA]</scope>
    <source>
        <strain>NCIMB 400</strain>
    </source>
</reference>